<accession>A5US48</accession>
<proteinExistence type="inferred from homology"/>
<name>LIPA_ROSS1</name>
<sequence length="301" mass="34084">MADLIPLIATDSLPSNRARRPEWLKVRAPGGANYHDVFRLMREQNLHTVCEEAHCPNIGECWNHRTATFLLLGNICTRGCRYCAIGKGKPEPIDEHEPERVAASVAHLKLKFAVLTSVNRDDVPDGGASIFARTIELIRQKAPDCKVEVLIPDFDGNWEALETVLAAEPDVLNHNIETVPRLFRRFRPRARFEQSIELLARARAARPYLVTKSGMMVGAGETNEEVYQVIDRLRDVDVNVLTIGQYLSPGASYWPVDRYVTPAEFAEFRRYALERGFRHVESGPLVRSSYHAHLHVNAQQH</sequence>
<feature type="chain" id="PRO_0000325305" description="Lipoyl synthase">
    <location>
        <begin position="1"/>
        <end position="301"/>
    </location>
</feature>
<feature type="domain" description="Radical SAM core" evidence="2">
    <location>
        <begin position="62"/>
        <end position="278"/>
    </location>
</feature>
<feature type="binding site" evidence="1">
    <location>
        <position position="50"/>
    </location>
    <ligand>
        <name>[4Fe-4S] cluster</name>
        <dbReference type="ChEBI" id="CHEBI:49883"/>
        <label>1</label>
    </ligand>
</feature>
<feature type="binding site" evidence="1">
    <location>
        <position position="55"/>
    </location>
    <ligand>
        <name>[4Fe-4S] cluster</name>
        <dbReference type="ChEBI" id="CHEBI:49883"/>
        <label>1</label>
    </ligand>
</feature>
<feature type="binding site" evidence="1">
    <location>
        <position position="61"/>
    </location>
    <ligand>
        <name>[4Fe-4S] cluster</name>
        <dbReference type="ChEBI" id="CHEBI:49883"/>
        <label>1</label>
    </ligand>
</feature>
<feature type="binding site" evidence="1">
    <location>
        <position position="76"/>
    </location>
    <ligand>
        <name>[4Fe-4S] cluster</name>
        <dbReference type="ChEBI" id="CHEBI:49883"/>
        <label>2</label>
        <note>4Fe-4S-S-AdoMet</note>
    </ligand>
</feature>
<feature type="binding site" evidence="1">
    <location>
        <position position="80"/>
    </location>
    <ligand>
        <name>[4Fe-4S] cluster</name>
        <dbReference type="ChEBI" id="CHEBI:49883"/>
        <label>2</label>
        <note>4Fe-4S-S-AdoMet</note>
    </ligand>
</feature>
<feature type="binding site" evidence="1">
    <location>
        <position position="83"/>
    </location>
    <ligand>
        <name>[4Fe-4S] cluster</name>
        <dbReference type="ChEBI" id="CHEBI:49883"/>
        <label>2</label>
        <note>4Fe-4S-S-AdoMet</note>
    </ligand>
</feature>
<feature type="binding site" evidence="1">
    <location>
        <position position="289"/>
    </location>
    <ligand>
        <name>[4Fe-4S] cluster</name>
        <dbReference type="ChEBI" id="CHEBI:49883"/>
        <label>1</label>
    </ligand>
</feature>
<dbReference type="EC" id="2.8.1.8" evidence="1"/>
<dbReference type="EMBL" id="CP000686">
    <property type="protein sequence ID" value="ABQ89451.1"/>
    <property type="molecule type" value="Genomic_DNA"/>
</dbReference>
<dbReference type="RefSeq" id="WP_011955804.1">
    <property type="nucleotide sequence ID" value="NC_009523.1"/>
</dbReference>
<dbReference type="SMR" id="A5US48"/>
<dbReference type="STRING" id="357808.RoseRS_1042"/>
<dbReference type="KEGG" id="rrs:RoseRS_1042"/>
<dbReference type="eggNOG" id="COG0320">
    <property type="taxonomic scope" value="Bacteria"/>
</dbReference>
<dbReference type="HOGENOM" id="CLU_033144_2_1_0"/>
<dbReference type="OrthoDB" id="9787898at2"/>
<dbReference type="UniPathway" id="UPA00538">
    <property type="reaction ID" value="UER00593"/>
</dbReference>
<dbReference type="Proteomes" id="UP000006554">
    <property type="component" value="Chromosome"/>
</dbReference>
<dbReference type="GO" id="GO:0005737">
    <property type="term" value="C:cytoplasm"/>
    <property type="evidence" value="ECO:0007669"/>
    <property type="project" value="UniProtKB-SubCell"/>
</dbReference>
<dbReference type="GO" id="GO:0051539">
    <property type="term" value="F:4 iron, 4 sulfur cluster binding"/>
    <property type="evidence" value="ECO:0007669"/>
    <property type="project" value="UniProtKB-UniRule"/>
</dbReference>
<dbReference type="GO" id="GO:0016992">
    <property type="term" value="F:lipoate synthase activity"/>
    <property type="evidence" value="ECO:0007669"/>
    <property type="project" value="UniProtKB-UniRule"/>
</dbReference>
<dbReference type="GO" id="GO:0046872">
    <property type="term" value="F:metal ion binding"/>
    <property type="evidence" value="ECO:0007669"/>
    <property type="project" value="UniProtKB-KW"/>
</dbReference>
<dbReference type="FunFam" id="3.20.20.70:FF:000040">
    <property type="entry name" value="Lipoyl synthase"/>
    <property type="match status" value="1"/>
</dbReference>
<dbReference type="Gene3D" id="3.20.20.70">
    <property type="entry name" value="Aldolase class I"/>
    <property type="match status" value="1"/>
</dbReference>
<dbReference type="HAMAP" id="MF_00206">
    <property type="entry name" value="Lipoyl_synth"/>
    <property type="match status" value="1"/>
</dbReference>
<dbReference type="InterPro" id="IPR013785">
    <property type="entry name" value="Aldolase_TIM"/>
</dbReference>
<dbReference type="InterPro" id="IPR006638">
    <property type="entry name" value="Elp3/MiaA/NifB-like_rSAM"/>
</dbReference>
<dbReference type="InterPro" id="IPR031691">
    <property type="entry name" value="LIAS_N"/>
</dbReference>
<dbReference type="InterPro" id="IPR003698">
    <property type="entry name" value="Lipoyl_synth"/>
</dbReference>
<dbReference type="InterPro" id="IPR007197">
    <property type="entry name" value="rSAM"/>
</dbReference>
<dbReference type="NCBIfam" id="TIGR00510">
    <property type="entry name" value="lipA"/>
    <property type="match status" value="1"/>
</dbReference>
<dbReference type="NCBIfam" id="NF004019">
    <property type="entry name" value="PRK05481.1"/>
    <property type="match status" value="1"/>
</dbReference>
<dbReference type="NCBIfam" id="NF009544">
    <property type="entry name" value="PRK12928.1"/>
    <property type="match status" value="1"/>
</dbReference>
<dbReference type="PANTHER" id="PTHR10949">
    <property type="entry name" value="LIPOYL SYNTHASE"/>
    <property type="match status" value="1"/>
</dbReference>
<dbReference type="PANTHER" id="PTHR10949:SF0">
    <property type="entry name" value="LIPOYL SYNTHASE, MITOCHONDRIAL"/>
    <property type="match status" value="1"/>
</dbReference>
<dbReference type="Pfam" id="PF16881">
    <property type="entry name" value="LIAS_N"/>
    <property type="match status" value="1"/>
</dbReference>
<dbReference type="Pfam" id="PF04055">
    <property type="entry name" value="Radical_SAM"/>
    <property type="match status" value="1"/>
</dbReference>
<dbReference type="PIRSF" id="PIRSF005963">
    <property type="entry name" value="Lipoyl_synth"/>
    <property type="match status" value="1"/>
</dbReference>
<dbReference type="SFLD" id="SFLDF00271">
    <property type="entry name" value="lipoyl_synthase"/>
    <property type="match status" value="1"/>
</dbReference>
<dbReference type="SFLD" id="SFLDG01058">
    <property type="entry name" value="lipoyl_synthase_like"/>
    <property type="match status" value="1"/>
</dbReference>
<dbReference type="SMART" id="SM00729">
    <property type="entry name" value="Elp3"/>
    <property type="match status" value="1"/>
</dbReference>
<dbReference type="SUPFAM" id="SSF102114">
    <property type="entry name" value="Radical SAM enzymes"/>
    <property type="match status" value="1"/>
</dbReference>
<dbReference type="PROSITE" id="PS51918">
    <property type="entry name" value="RADICAL_SAM"/>
    <property type="match status" value="1"/>
</dbReference>
<organism>
    <name type="scientific">Roseiflexus sp. (strain RS-1)</name>
    <dbReference type="NCBI Taxonomy" id="357808"/>
    <lineage>
        <taxon>Bacteria</taxon>
        <taxon>Bacillati</taxon>
        <taxon>Chloroflexota</taxon>
        <taxon>Chloroflexia</taxon>
        <taxon>Chloroflexales</taxon>
        <taxon>Roseiflexineae</taxon>
        <taxon>Roseiflexaceae</taxon>
        <taxon>Roseiflexus</taxon>
    </lineage>
</organism>
<gene>
    <name evidence="1" type="primary">lipA</name>
    <name type="ordered locus">RoseRS_1042</name>
</gene>
<protein>
    <recommendedName>
        <fullName evidence="1">Lipoyl synthase</fullName>
        <ecNumber evidence="1">2.8.1.8</ecNumber>
    </recommendedName>
    <alternativeName>
        <fullName evidence="1">Lip-syn</fullName>
        <shortName evidence="1">LS</shortName>
    </alternativeName>
    <alternativeName>
        <fullName evidence="1">Lipoate synthase</fullName>
    </alternativeName>
    <alternativeName>
        <fullName evidence="1">Lipoic acid synthase</fullName>
    </alternativeName>
    <alternativeName>
        <fullName evidence="1">Sulfur insertion protein LipA</fullName>
    </alternativeName>
</protein>
<comment type="function">
    <text evidence="1">Catalyzes the radical-mediated insertion of two sulfur atoms into the C-6 and C-8 positions of the octanoyl moiety bound to the lipoyl domains of lipoate-dependent enzymes, thereby converting the octanoylated domains into lipoylated derivatives.</text>
</comment>
<comment type="catalytic activity">
    <reaction evidence="1">
        <text>[[Fe-S] cluster scaffold protein carrying a second [4Fe-4S](2+) cluster] + N(6)-octanoyl-L-lysyl-[protein] + 2 oxidized [2Fe-2S]-[ferredoxin] + 2 S-adenosyl-L-methionine + 4 H(+) = [[Fe-S] cluster scaffold protein] + N(6)-[(R)-dihydrolipoyl]-L-lysyl-[protein] + 4 Fe(3+) + 2 hydrogen sulfide + 2 5'-deoxyadenosine + 2 L-methionine + 2 reduced [2Fe-2S]-[ferredoxin]</text>
        <dbReference type="Rhea" id="RHEA:16585"/>
        <dbReference type="Rhea" id="RHEA-COMP:9928"/>
        <dbReference type="Rhea" id="RHEA-COMP:10000"/>
        <dbReference type="Rhea" id="RHEA-COMP:10001"/>
        <dbReference type="Rhea" id="RHEA-COMP:10475"/>
        <dbReference type="Rhea" id="RHEA-COMP:14568"/>
        <dbReference type="Rhea" id="RHEA-COMP:14569"/>
        <dbReference type="ChEBI" id="CHEBI:15378"/>
        <dbReference type="ChEBI" id="CHEBI:17319"/>
        <dbReference type="ChEBI" id="CHEBI:29034"/>
        <dbReference type="ChEBI" id="CHEBI:29919"/>
        <dbReference type="ChEBI" id="CHEBI:33722"/>
        <dbReference type="ChEBI" id="CHEBI:33737"/>
        <dbReference type="ChEBI" id="CHEBI:33738"/>
        <dbReference type="ChEBI" id="CHEBI:57844"/>
        <dbReference type="ChEBI" id="CHEBI:59789"/>
        <dbReference type="ChEBI" id="CHEBI:78809"/>
        <dbReference type="ChEBI" id="CHEBI:83100"/>
        <dbReference type="EC" id="2.8.1.8"/>
    </reaction>
</comment>
<comment type="cofactor">
    <cofactor evidence="1">
        <name>[4Fe-4S] cluster</name>
        <dbReference type="ChEBI" id="CHEBI:49883"/>
    </cofactor>
    <text evidence="1">Binds 2 [4Fe-4S] clusters per subunit. One cluster is coordinated with 3 cysteines and an exchangeable S-adenosyl-L-methionine.</text>
</comment>
<comment type="pathway">
    <text evidence="1">Protein modification; protein lipoylation via endogenous pathway; protein N(6)-(lipoyl)lysine from octanoyl-[acyl-carrier-protein]: step 2/2.</text>
</comment>
<comment type="subcellular location">
    <subcellularLocation>
        <location evidence="1">Cytoplasm</location>
    </subcellularLocation>
</comment>
<comment type="similarity">
    <text evidence="1">Belongs to the radical SAM superfamily. Lipoyl synthase family.</text>
</comment>
<keyword id="KW-0004">4Fe-4S</keyword>
<keyword id="KW-0963">Cytoplasm</keyword>
<keyword id="KW-0408">Iron</keyword>
<keyword id="KW-0411">Iron-sulfur</keyword>
<keyword id="KW-0479">Metal-binding</keyword>
<keyword id="KW-0949">S-adenosyl-L-methionine</keyword>
<keyword id="KW-0808">Transferase</keyword>
<evidence type="ECO:0000255" key="1">
    <source>
        <dbReference type="HAMAP-Rule" id="MF_00206"/>
    </source>
</evidence>
<evidence type="ECO:0000255" key="2">
    <source>
        <dbReference type="PROSITE-ProRule" id="PRU01266"/>
    </source>
</evidence>
<reference key="1">
    <citation type="submission" date="2007-04" db="EMBL/GenBank/DDBJ databases">
        <title>Complete sequence of Roseiflexus sp. RS-1.</title>
        <authorList>
            <consortium name="US DOE Joint Genome Institute"/>
            <person name="Copeland A."/>
            <person name="Lucas S."/>
            <person name="Lapidus A."/>
            <person name="Barry K."/>
            <person name="Detter J.C."/>
            <person name="Glavina del Rio T."/>
            <person name="Hammon N."/>
            <person name="Israni S."/>
            <person name="Dalin E."/>
            <person name="Tice H."/>
            <person name="Pitluck S."/>
            <person name="Chertkov O."/>
            <person name="Brettin T."/>
            <person name="Bruce D."/>
            <person name="Han C."/>
            <person name="Schmutz J."/>
            <person name="Larimer F."/>
            <person name="Land M."/>
            <person name="Hauser L."/>
            <person name="Kyrpides N."/>
            <person name="Mikhailova N."/>
            <person name="Bryant D.A."/>
            <person name="Richardson P."/>
        </authorList>
    </citation>
    <scope>NUCLEOTIDE SEQUENCE [LARGE SCALE GENOMIC DNA]</scope>
    <source>
        <strain>RS-1</strain>
    </source>
</reference>